<gene>
    <name type="ORF">PVX_089705</name>
</gene>
<name>ASNA_PLAVS</name>
<organism>
    <name type="scientific">Plasmodium vivax (strain Salvador I)</name>
    <dbReference type="NCBI Taxonomy" id="126793"/>
    <lineage>
        <taxon>Eukaryota</taxon>
        <taxon>Sar</taxon>
        <taxon>Alveolata</taxon>
        <taxon>Apicomplexa</taxon>
        <taxon>Aconoidasida</taxon>
        <taxon>Haemosporida</taxon>
        <taxon>Plasmodiidae</taxon>
        <taxon>Plasmodium</taxon>
        <taxon>Plasmodium (Plasmodium)</taxon>
    </lineage>
</organism>
<evidence type="ECO:0000255" key="1">
    <source>
        <dbReference type="HAMAP-Rule" id="MF_03112"/>
    </source>
</evidence>
<comment type="function">
    <text evidence="1">ATPase required for the post-translational delivery of tail-anchored (TA) proteins to the endoplasmic reticulum. Recognizes and selectively binds the transmembrane domain of TA proteins in the cytosol. This complex then targets to the endoplasmic reticulum by membrane-bound receptors, where the tail-anchored protein is released for insertion. This process is regulated by ATP binding and hydrolysis. ATP binding drives the homodimer towards the closed dimer state, facilitating recognition of newly synthesized TA membrane proteins. ATP hydrolysis is required for insertion. Subsequently, the homodimer reverts towards the open dimer state, lowering its affinity for the membrane-bound receptor, and returning it to the cytosol to initiate a new round of targeting.</text>
</comment>
<comment type="subunit">
    <text evidence="1">Homodimer.</text>
</comment>
<comment type="subcellular location">
    <subcellularLocation>
        <location evidence="1">Cytoplasm</location>
    </subcellularLocation>
    <subcellularLocation>
        <location evidence="1">Endoplasmic reticulum</location>
    </subcellularLocation>
</comment>
<comment type="similarity">
    <text evidence="1">Belongs to the arsA ATPase family.</text>
</comment>
<keyword id="KW-0067">ATP-binding</keyword>
<keyword id="KW-0963">Cytoplasm</keyword>
<keyword id="KW-0256">Endoplasmic reticulum</keyword>
<keyword id="KW-0378">Hydrolase</keyword>
<keyword id="KW-0547">Nucleotide-binding</keyword>
<keyword id="KW-1185">Reference proteome</keyword>
<keyword id="KW-0813">Transport</keyword>
<accession>A5K5W9</accession>
<feature type="chain" id="PRO_0000388173" description="ATPase ASNA1 homolog">
    <location>
        <begin position="1"/>
        <end position="374"/>
    </location>
</feature>
<feature type="active site" evidence="1">
    <location>
        <position position="73"/>
    </location>
</feature>
<feature type="binding site" evidence="1">
    <location>
        <begin position="44"/>
        <end position="51"/>
    </location>
    <ligand>
        <name>ATP</name>
        <dbReference type="ChEBI" id="CHEBI:30616"/>
    </ligand>
</feature>
<feature type="binding site" evidence="1">
    <location>
        <position position="244"/>
    </location>
    <ligand>
        <name>ATP</name>
        <dbReference type="ChEBI" id="CHEBI:30616"/>
    </ligand>
</feature>
<feature type="binding site" evidence="1">
    <location>
        <position position="271"/>
    </location>
    <ligand>
        <name>ATP</name>
        <dbReference type="ChEBI" id="CHEBI:30616"/>
    </ligand>
</feature>
<reference key="1">
    <citation type="journal article" date="2008" name="Nature">
        <title>Comparative genomics of the neglected human malaria parasite Plasmodium vivax.</title>
        <authorList>
            <person name="Carlton J.M."/>
            <person name="Adams J.H."/>
            <person name="Silva J.C."/>
            <person name="Bidwell S.L."/>
            <person name="Lorenzi H."/>
            <person name="Caler E."/>
            <person name="Crabtree J."/>
            <person name="Angiuoli S.V."/>
            <person name="Merino E.F."/>
            <person name="Amedeo P."/>
            <person name="Cheng Q."/>
            <person name="Coulson R.M.R."/>
            <person name="Crabb B.S."/>
            <person name="del Portillo H.A."/>
            <person name="Essien K."/>
            <person name="Feldblyum T.V."/>
            <person name="Fernandez-Becerra C."/>
            <person name="Gilson P.R."/>
            <person name="Gueye A.H."/>
            <person name="Guo X."/>
            <person name="Kang'a S."/>
            <person name="Kooij T.W.A."/>
            <person name="Korsinczky M."/>
            <person name="Meyer E.V.-S."/>
            <person name="Nene V."/>
            <person name="Paulsen I."/>
            <person name="White O."/>
            <person name="Ralph S.A."/>
            <person name="Ren Q."/>
            <person name="Sargeant T.J."/>
            <person name="Salzberg S.L."/>
            <person name="Stoeckert C.J."/>
            <person name="Sullivan S.A."/>
            <person name="Yamamoto M.M."/>
            <person name="Hoffman S.L."/>
            <person name="Wortman J.R."/>
            <person name="Gardner M.J."/>
            <person name="Galinski M.R."/>
            <person name="Barnwell J.W."/>
            <person name="Fraser-Liggett C.M."/>
        </authorList>
    </citation>
    <scope>NUCLEOTIDE SEQUENCE [LARGE SCALE GENOMIC DNA]</scope>
    <source>
        <strain>Salvador I</strain>
    </source>
</reference>
<proteinExistence type="inferred from homology"/>
<dbReference type="EC" id="3.6.-.-" evidence="1"/>
<dbReference type="EMBL" id="AAKM01000006">
    <property type="protein sequence ID" value="EDL45304.1"/>
    <property type="molecule type" value="Genomic_DNA"/>
</dbReference>
<dbReference type="RefSeq" id="XP_001615031.1">
    <property type="nucleotide sequence ID" value="XM_001614981.1"/>
</dbReference>
<dbReference type="SMR" id="A5K5W9"/>
<dbReference type="FunCoup" id="A5K5W9">
    <property type="interactions" value="492"/>
</dbReference>
<dbReference type="STRING" id="126793.A5K5W9"/>
<dbReference type="EnsemblProtists" id="EDL45304">
    <property type="protein sequence ID" value="EDL45304"/>
    <property type="gene ID" value="PVX_089705"/>
</dbReference>
<dbReference type="GeneID" id="5474322"/>
<dbReference type="KEGG" id="pvx:PVX_089705"/>
<dbReference type="VEuPathDB" id="PlasmoDB:PVX_089705"/>
<dbReference type="InParanoid" id="A5K5W9"/>
<dbReference type="OMA" id="IGNNEPR"/>
<dbReference type="PhylomeDB" id="A5K5W9"/>
<dbReference type="Proteomes" id="UP000008333">
    <property type="component" value="Chromosome 5"/>
</dbReference>
<dbReference type="GO" id="GO:0043529">
    <property type="term" value="C:GET complex"/>
    <property type="evidence" value="ECO:0007669"/>
    <property type="project" value="TreeGrafter"/>
</dbReference>
<dbReference type="GO" id="GO:0005524">
    <property type="term" value="F:ATP binding"/>
    <property type="evidence" value="ECO:0007669"/>
    <property type="project" value="UniProtKB-UniRule"/>
</dbReference>
<dbReference type="GO" id="GO:0016887">
    <property type="term" value="F:ATP hydrolysis activity"/>
    <property type="evidence" value="ECO:0007669"/>
    <property type="project" value="InterPro"/>
</dbReference>
<dbReference type="GO" id="GO:0071816">
    <property type="term" value="P:tail-anchored membrane protein insertion into ER membrane"/>
    <property type="evidence" value="ECO:0007669"/>
    <property type="project" value="TreeGrafter"/>
</dbReference>
<dbReference type="CDD" id="cd02035">
    <property type="entry name" value="ArsA"/>
    <property type="match status" value="1"/>
</dbReference>
<dbReference type="FunFam" id="3.40.50.300:FF:001459">
    <property type="entry name" value="ATPase ASNA1 homolog"/>
    <property type="match status" value="1"/>
</dbReference>
<dbReference type="Gene3D" id="3.40.50.300">
    <property type="entry name" value="P-loop containing nucleotide triphosphate hydrolases"/>
    <property type="match status" value="1"/>
</dbReference>
<dbReference type="HAMAP" id="MF_03112">
    <property type="entry name" value="Asna1_Get3"/>
    <property type="match status" value="1"/>
</dbReference>
<dbReference type="InterPro" id="IPR025723">
    <property type="entry name" value="Anion-transp_ATPase-like_dom"/>
</dbReference>
<dbReference type="InterPro" id="IPR016300">
    <property type="entry name" value="ATPase_ArsA/GET3"/>
</dbReference>
<dbReference type="InterPro" id="IPR027542">
    <property type="entry name" value="ATPase_ArsA/GET3_euk"/>
</dbReference>
<dbReference type="InterPro" id="IPR027417">
    <property type="entry name" value="P-loop_NTPase"/>
</dbReference>
<dbReference type="NCBIfam" id="TIGR00345">
    <property type="entry name" value="GET3_arsA_TRC40"/>
    <property type="match status" value="1"/>
</dbReference>
<dbReference type="PANTHER" id="PTHR10803">
    <property type="entry name" value="ARSENICAL PUMP-DRIVING ATPASE ARSENITE-TRANSLOCATING ATPASE"/>
    <property type="match status" value="1"/>
</dbReference>
<dbReference type="PANTHER" id="PTHR10803:SF3">
    <property type="entry name" value="ATPASE GET3"/>
    <property type="match status" value="1"/>
</dbReference>
<dbReference type="Pfam" id="PF02374">
    <property type="entry name" value="ArsA_ATPase"/>
    <property type="match status" value="2"/>
</dbReference>
<dbReference type="SUPFAM" id="SSF52540">
    <property type="entry name" value="P-loop containing nucleoside triphosphate hydrolases"/>
    <property type="match status" value="1"/>
</dbReference>
<sequence length="374" mass="42682">MSDADSLSCSLTLESDEYDEEEYDTNLSKLLENKTLNWIFVGGKGGVGKTTTSCSIAVQLAKRRESVLLLSTDPAHNTSDAFNQKFTNQPTLINSFDNLYCMEIDTTYSENTAFKLNKTEFFDNIIPELLQSFPGIDEALCFAELMQSIKNMKYSVIVFDTAPTGHTLRLLAFPELLKKALGYLINLREKLKGTLNMLKSFTNNEMELEGIYEKINHLNAMSISIQSNFQNPLKTTFVCVCIPEFLSVYETERLIQELTKKNISCYNIVVNQVVFPLDSMTVDVAHCEGLLKQIKDKQVQESFSSLVQKTKELEDVYISRRKLQSKYLTQIKNLYGNDFHIVCMPQLKSEIRGLQNISNFSEMLLESKEIPIYR</sequence>
<protein>
    <recommendedName>
        <fullName evidence="1">ATPase ASNA1 homolog</fullName>
        <ecNumber evidence="1">3.6.-.-</ecNumber>
    </recommendedName>
    <alternativeName>
        <fullName evidence="1">Arsenical pump-driving ATPase homolog</fullName>
    </alternativeName>
    <alternativeName>
        <fullName evidence="1">Arsenite-stimulated ATPase</fullName>
    </alternativeName>
</protein>